<protein>
    <recommendedName>
        <fullName>CEACAM1-like protein UL7</fullName>
    </recommendedName>
</protein>
<name>UL07_HCMVM</name>
<evidence type="ECO:0000250" key="1">
    <source>
        <dbReference type="UniProtKB" id="P16743"/>
    </source>
</evidence>
<evidence type="ECO:0000255" key="2"/>
<evidence type="ECO:0000269" key="3">
    <source>
    </source>
</evidence>
<evidence type="ECO:0000305" key="4"/>
<reference key="1">
    <citation type="journal article" date="2004" name="J. Gen. Virol.">
        <title>Genetic content of wild-type human cytomegalovirus.</title>
        <authorList>
            <person name="Dolan A."/>
            <person name="Cunningham C."/>
            <person name="Hector R.D."/>
            <person name="Hassan-Walker A.F."/>
            <person name="Lee L."/>
            <person name="Addison C."/>
            <person name="Dargan D.J."/>
            <person name="McGeoch D.J."/>
            <person name="Gatherer D."/>
            <person name="Emery V.C."/>
            <person name="Griffiths P.D."/>
            <person name="Sinzger C."/>
            <person name="McSharry B.P."/>
            <person name="Wilkinson G.W.G."/>
            <person name="Davison A.J."/>
        </authorList>
    </citation>
    <scope>NUCLEOTIDE SEQUENCE [LARGE SCALE GENOMIC DNA]</scope>
</reference>
<reference key="2">
    <citation type="journal article" date="2014" name="MBio">
        <title>Human cytomegalovirus-encoded pUL7 is a novel CEACAM1-like molecule responsible for promotion of angiogenesis.</title>
        <authorList>
            <person name="MacManiman J.D."/>
            <person name="Meuser A."/>
            <person name="Botto S."/>
            <person name="Smith P.P."/>
            <person name="Liu F."/>
            <person name="Jarvis M.A."/>
            <person name="Nelson J.A."/>
            <person name="Caposio P."/>
        </authorList>
    </citation>
    <scope>FUNCTION</scope>
    <scope>SUBCELLULAR LOCATION</scope>
</reference>
<proteinExistence type="inferred from homology"/>
<dbReference type="EMBL" id="AY446894">
    <property type="protein sequence ID" value="AAR31573.1"/>
    <property type="molecule type" value="Genomic_DNA"/>
</dbReference>
<dbReference type="RefSeq" id="YP_081467.1">
    <property type="nucleotide sequence ID" value="NC_006273.2"/>
</dbReference>
<dbReference type="SMR" id="Q6SWC3"/>
<dbReference type="GlyCosmos" id="Q6SWC3">
    <property type="glycosylation" value="12 sites, No reported glycans"/>
</dbReference>
<dbReference type="DNASU" id="3077480"/>
<dbReference type="GeneID" id="3077480"/>
<dbReference type="KEGG" id="vg:3077480"/>
<dbReference type="Reactome" id="R-HSA-9610379">
    <property type="pathway name" value="HCMV Late Events"/>
</dbReference>
<dbReference type="Proteomes" id="UP000000938">
    <property type="component" value="Segment"/>
</dbReference>
<dbReference type="GO" id="GO:0005576">
    <property type="term" value="C:extracellular region"/>
    <property type="evidence" value="ECO:0007669"/>
    <property type="project" value="UniProtKB-SubCell"/>
</dbReference>
<dbReference type="GO" id="GO:0020002">
    <property type="term" value="C:host cell plasma membrane"/>
    <property type="evidence" value="ECO:0007669"/>
    <property type="project" value="UniProtKB-SubCell"/>
</dbReference>
<dbReference type="GO" id="GO:0016020">
    <property type="term" value="C:membrane"/>
    <property type="evidence" value="ECO:0007669"/>
    <property type="project" value="UniProtKB-KW"/>
</dbReference>
<dbReference type="GO" id="GO:0141134">
    <property type="term" value="P:symbiont-mediated activation of host signal transduction pathway via agonism of host cell surface receptor"/>
    <property type="evidence" value="ECO:0000269"/>
    <property type="project" value="SigSci"/>
</dbReference>
<dbReference type="GO" id="GO:0039673">
    <property type="term" value="P:symbiont-mediated suppression of host dendritic cell mediated immune response"/>
    <property type="evidence" value="ECO:0007669"/>
    <property type="project" value="UniProtKB-KW"/>
</dbReference>
<dbReference type="Gene3D" id="2.60.40.10">
    <property type="entry name" value="Immunoglobulins"/>
    <property type="match status" value="1"/>
</dbReference>
<dbReference type="InterPro" id="IPR036179">
    <property type="entry name" value="Ig-like_dom_sf"/>
</dbReference>
<dbReference type="InterPro" id="IPR013783">
    <property type="entry name" value="Ig-like_fold"/>
</dbReference>
<dbReference type="SUPFAM" id="SSF48726">
    <property type="entry name" value="Immunoglobulin"/>
    <property type="match status" value="1"/>
</dbReference>
<gene>
    <name type="primary">UL7</name>
</gene>
<sequence length="222" mass="24322">MASDVGSHPLTVTRFRCRVHYVYNKLLILTLFAPVILESVIYVSGPQGGNVTLVSNFTSNISARWFRWDGNDSHLICFYKRGEGLSTPYVGLSLSCAANQITIFNLTLNDSGRYGAEGFTRSGENETFLWYNLTVKPKPLETTPASNVTTIVTTTSTVTDAKSNVTGNVSLAPQLRAVAGFSHQTPLENNTHLALVGVVVFLVLIVVCIMGWWKLLCSKSEL</sequence>
<accession>Q6SWC3</accession>
<accession>D2K3H7</accession>
<organismHost>
    <name type="scientific">Homo sapiens</name>
    <name type="common">Human</name>
    <dbReference type="NCBI Taxonomy" id="9606"/>
</organismHost>
<comment type="function">
    <text evidence="3">Plays a role in modulating the host immune response and affecting host cytokine production. Structurally and functionally homolog of host CEACAM1, induces endothelial cell angiogenesis.</text>
</comment>
<comment type="subcellular location">
    <subcellularLocation>
        <location evidence="3">Secreted</location>
    </subcellularLocation>
    <subcellularLocation>
        <location evidence="1">Host cell membrane</location>
        <topology evidence="4">Single-pass membrane protein</topology>
    </subcellularLocation>
</comment>
<comment type="PTM">
    <text evidence="1">Highly glycosylated.</text>
</comment>
<comment type="similarity">
    <text evidence="4">Belongs to the RL11 family.</text>
</comment>
<keyword id="KW-0325">Glycoprotein</keyword>
<keyword id="KW-1032">Host cell membrane</keyword>
<keyword id="KW-1043">Host membrane</keyword>
<keyword id="KW-0945">Host-virus interaction</keyword>
<keyword id="KW-0472">Membrane</keyword>
<keyword id="KW-1118">Modulation of host dendritic cell activity by virus</keyword>
<keyword id="KW-1185">Reference proteome</keyword>
<keyword id="KW-0964">Secreted</keyword>
<keyword id="KW-0812">Transmembrane</keyword>
<keyword id="KW-1133">Transmembrane helix</keyword>
<keyword id="KW-0899">Viral immunoevasion</keyword>
<feature type="chain" id="PRO_0000417835" description="CEACAM1-like protein UL7">
    <location>
        <begin position="1"/>
        <end position="222"/>
    </location>
</feature>
<feature type="transmembrane region" description="Helical" evidence="2">
    <location>
        <begin position="193"/>
        <end position="213"/>
    </location>
</feature>
<feature type="glycosylation site" description="N-linked (GlcNAc...) asparagine; by host" evidence="2">
    <location>
        <position position="50"/>
    </location>
</feature>
<feature type="glycosylation site" description="N-linked (GlcNAc...) asparagine; by host" evidence="2">
    <location>
        <position position="56"/>
    </location>
</feature>
<feature type="glycosylation site" description="N-linked (GlcNAc...) asparagine; by host" evidence="2">
    <location>
        <position position="60"/>
    </location>
</feature>
<feature type="glycosylation site" description="N-linked (GlcNAc...) asparagine; by host" evidence="2">
    <location>
        <position position="71"/>
    </location>
</feature>
<feature type="glycosylation site" description="N-linked (GlcNAc...) asparagine; by host" evidence="2">
    <location>
        <position position="105"/>
    </location>
</feature>
<feature type="glycosylation site" description="N-linked (GlcNAc...) asparagine; by host" evidence="2">
    <location>
        <position position="109"/>
    </location>
</feature>
<feature type="glycosylation site" description="N-linked (GlcNAc...) asparagine; by host" evidence="2">
    <location>
        <position position="125"/>
    </location>
</feature>
<feature type="glycosylation site" description="N-linked (GlcNAc...) asparagine; by host" evidence="2">
    <location>
        <position position="132"/>
    </location>
</feature>
<feature type="glycosylation site" description="N-linked (GlcNAc...) asparagine; by host" evidence="2">
    <location>
        <position position="147"/>
    </location>
</feature>
<feature type="glycosylation site" description="N-linked (GlcNAc...) asparagine; by host" evidence="2">
    <location>
        <position position="164"/>
    </location>
</feature>
<feature type="glycosylation site" description="N-linked (GlcNAc...) asparagine; by host" evidence="2">
    <location>
        <position position="168"/>
    </location>
</feature>
<feature type="glycosylation site" description="N-linked (GlcNAc...) asparagine; by host" evidence="2">
    <location>
        <position position="189"/>
    </location>
</feature>
<organism>
    <name type="scientific">Human cytomegalovirus (strain Merlin)</name>
    <name type="common">HHV-5</name>
    <name type="synonym">Human herpesvirus 5</name>
    <dbReference type="NCBI Taxonomy" id="295027"/>
    <lineage>
        <taxon>Viruses</taxon>
        <taxon>Duplodnaviria</taxon>
        <taxon>Heunggongvirae</taxon>
        <taxon>Peploviricota</taxon>
        <taxon>Herviviricetes</taxon>
        <taxon>Herpesvirales</taxon>
        <taxon>Orthoherpesviridae</taxon>
        <taxon>Betaherpesvirinae</taxon>
        <taxon>Cytomegalovirus</taxon>
        <taxon>Cytomegalovirus humanbeta5</taxon>
        <taxon>Human cytomegalovirus</taxon>
    </lineage>
</organism>